<keyword id="KW-0963">Cytoplasm</keyword>
<keyword id="KW-0226">DNA condensation</keyword>
<keyword id="KW-0238">DNA-binding</keyword>
<keyword id="KW-0408">Iron</keyword>
<keyword id="KW-0409">Iron storage</keyword>
<keyword id="KW-0479">Metal-binding</keyword>
<keyword id="KW-0560">Oxidoreductase</keyword>
<evidence type="ECO:0000255" key="1">
    <source>
        <dbReference type="HAMAP-Rule" id="MF_01441"/>
    </source>
</evidence>
<protein>
    <recommendedName>
        <fullName evidence="1">DNA protection during starvation protein</fullName>
        <ecNumber evidence="1">1.16.-.-</ecNumber>
    </recommendedName>
</protein>
<sequence length="167" mass="18871">MSTAKLVKTKPSELLYTRNDVEEHVKVATIKRLNQMVIQFIDLSLITKQAHWNMRGANFVAVHEMLDGFRTALTDHLDTFAERAVQLGGVALGTAQVINDKTPLKSYPTNIHSVQEHLKALAERYAIVANDIRKAITEVEDENSADMFTAASRDLDKFLWFIESNIE</sequence>
<accession>B2K7Y0</accession>
<proteinExistence type="inferred from homology"/>
<gene>
    <name evidence="1" type="primary">dps</name>
    <name type="ordered locus">YPTS_2641</name>
</gene>
<feature type="chain" id="PRO_1000145918" description="DNA protection during starvation protein">
    <location>
        <begin position="1"/>
        <end position="167"/>
    </location>
</feature>
<feature type="binding site" evidence="1">
    <location>
        <position position="51"/>
    </location>
    <ligand>
        <name>Fe cation</name>
        <dbReference type="ChEBI" id="CHEBI:24875"/>
    </ligand>
</feature>
<feature type="binding site" evidence="1">
    <location>
        <position position="78"/>
    </location>
    <ligand>
        <name>Fe cation</name>
        <dbReference type="ChEBI" id="CHEBI:24875"/>
    </ligand>
</feature>
<feature type="binding site" evidence="1">
    <location>
        <position position="82"/>
    </location>
    <ligand>
        <name>Fe cation</name>
        <dbReference type="ChEBI" id="CHEBI:24875"/>
    </ligand>
</feature>
<dbReference type="EC" id="1.16.-.-" evidence="1"/>
<dbReference type="EMBL" id="CP001048">
    <property type="protein sequence ID" value="ACC89601.1"/>
    <property type="molecule type" value="Genomic_DNA"/>
</dbReference>
<dbReference type="RefSeq" id="WP_002210233.1">
    <property type="nucleotide sequence ID" value="NZ_CP009780.1"/>
</dbReference>
<dbReference type="SMR" id="B2K7Y0"/>
<dbReference type="GeneID" id="57976175"/>
<dbReference type="KEGG" id="ypb:YPTS_2641"/>
<dbReference type="PATRIC" id="fig|502801.10.peg.2055"/>
<dbReference type="GO" id="GO:0005737">
    <property type="term" value="C:cytoplasm"/>
    <property type="evidence" value="ECO:0007669"/>
    <property type="project" value="UniProtKB-SubCell"/>
</dbReference>
<dbReference type="GO" id="GO:0003677">
    <property type="term" value="F:DNA binding"/>
    <property type="evidence" value="ECO:0007669"/>
    <property type="project" value="UniProtKB-UniRule"/>
</dbReference>
<dbReference type="GO" id="GO:0008199">
    <property type="term" value="F:ferric iron binding"/>
    <property type="evidence" value="ECO:0007669"/>
    <property type="project" value="UniProtKB-UniRule"/>
</dbReference>
<dbReference type="GO" id="GO:0016722">
    <property type="term" value="F:oxidoreductase activity, acting on metal ions"/>
    <property type="evidence" value="ECO:0007669"/>
    <property type="project" value="InterPro"/>
</dbReference>
<dbReference type="GO" id="GO:0030261">
    <property type="term" value="P:chromosome condensation"/>
    <property type="evidence" value="ECO:0007669"/>
    <property type="project" value="UniProtKB-KW"/>
</dbReference>
<dbReference type="GO" id="GO:0006879">
    <property type="term" value="P:intracellular iron ion homeostasis"/>
    <property type="evidence" value="ECO:0007669"/>
    <property type="project" value="UniProtKB-KW"/>
</dbReference>
<dbReference type="CDD" id="cd01043">
    <property type="entry name" value="DPS"/>
    <property type="match status" value="1"/>
</dbReference>
<dbReference type="Gene3D" id="1.20.1260.10">
    <property type="match status" value="1"/>
</dbReference>
<dbReference type="HAMAP" id="MF_01441">
    <property type="entry name" value="Dps"/>
    <property type="match status" value="1"/>
</dbReference>
<dbReference type="InterPro" id="IPR002177">
    <property type="entry name" value="DPS_DNA-bd"/>
</dbReference>
<dbReference type="InterPro" id="IPR023188">
    <property type="entry name" value="DPS_DNA-bd_CS"/>
</dbReference>
<dbReference type="InterPro" id="IPR023067">
    <property type="entry name" value="Dps_gammaproteobac"/>
</dbReference>
<dbReference type="InterPro" id="IPR012347">
    <property type="entry name" value="Ferritin-like"/>
</dbReference>
<dbReference type="InterPro" id="IPR009078">
    <property type="entry name" value="Ferritin-like_SF"/>
</dbReference>
<dbReference type="InterPro" id="IPR008331">
    <property type="entry name" value="Ferritin_DPS_dom"/>
</dbReference>
<dbReference type="NCBIfam" id="NF006975">
    <property type="entry name" value="PRK09448.1"/>
    <property type="match status" value="1"/>
</dbReference>
<dbReference type="PANTHER" id="PTHR42932:SF3">
    <property type="entry name" value="DNA PROTECTION DURING STARVATION PROTEIN"/>
    <property type="match status" value="1"/>
</dbReference>
<dbReference type="PANTHER" id="PTHR42932">
    <property type="entry name" value="GENERAL STRESS PROTEIN 20U"/>
    <property type="match status" value="1"/>
</dbReference>
<dbReference type="Pfam" id="PF00210">
    <property type="entry name" value="Ferritin"/>
    <property type="match status" value="1"/>
</dbReference>
<dbReference type="PIRSF" id="PIRSF005900">
    <property type="entry name" value="Dps"/>
    <property type="match status" value="1"/>
</dbReference>
<dbReference type="PRINTS" id="PR01346">
    <property type="entry name" value="HELNAPAPROT"/>
</dbReference>
<dbReference type="SUPFAM" id="SSF47240">
    <property type="entry name" value="Ferritin-like"/>
    <property type="match status" value="1"/>
</dbReference>
<dbReference type="PROSITE" id="PS00818">
    <property type="entry name" value="DPS_1"/>
    <property type="match status" value="1"/>
</dbReference>
<organism>
    <name type="scientific">Yersinia pseudotuberculosis serotype IB (strain PB1/+)</name>
    <dbReference type="NCBI Taxonomy" id="502801"/>
    <lineage>
        <taxon>Bacteria</taxon>
        <taxon>Pseudomonadati</taxon>
        <taxon>Pseudomonadota</taxon>
        <taxon>Gammaproteobacteria</taxon>
        <taxon>Enterobacterales</taxon>
        <taxon>Yersiniaceae</taxon>
        <taxon>Yersinia</taxon>
    </lineage>
</organism>
<comment type="function">
    <text evidence="1">During stationary phase, binds the chromosome non-specifically, forming a highly ordered and stable dps-DNA co-crystal within which chromosomal DNA is condensed and protected from diverse damages. It protects DNA from oxidative damage by sequestering intracellular Fe(2+) ion and storing it in the form of Fe(3+) oxyhydroxide mineral, which can be released after reduction. One hydrogen peroxide oxidizes two Fe(2+) ions, which prevents hydroxyl radical production by the Fenton reaction.</text>
</comment>
<comment type="catalytic activity">
    <reaction evidence="1">
        <text>2 Fe(2+) + H2O2 + 2 H(+) = 2 Fe(3+) + 2 H2O</text>
        <dbReference type="Rhea" id="RHEA:48712"/>
        <dbReference type="ChEBI" id="CHEBI:15377"/>
        <dbReference type="ChEBI" id="CHEBI:15378"/>
        <dbReference type="ChEBI" id="CHEBI:16240"/>
        <dbReference type="ChEBI" id="CHEBI:29033"/>
        <dbReference type="ChEBI" id="CHEBI:29034"/>
    </reaction>
</comment>
<comment type="subunit">
    <text evidence="1">Homododecamer. The 12 subunits form a hollow sphere into which the mineral iron core of up to 500 Fe(3+) can be deposited.</text>
</comment>
<comment type="subcellular location">
    <subcellularLocation>
        <location evidence="1">Cytoplasm</location>
    </subcellularLocation>
</comment>
<comment type="similarity">
    <text evidence="1">Belongs to the Dps family.</text>
</comment>
<name>DPS_YERPB</name>
<reference key="1">
    <citation type="submission" date="2008-04" db="EMBL/GenBank/DDBJ databases">
        <title>Complete sequence of Yersinia pseudotuberculosis PB1/+.</title>
        <authorList>
            <person name="Copeland A."/>
            <person name="Lucas S."/>
            <person name="Lapidus A."/>
            <person name="Glavina del Rio T."/>
            <person name="Dalin E."/>
            <person name="Tice H."/>
            <person name="Bruce D."/>
            <person name="Goodwin L."/>
            <person name="Pitluck S."/>
            <person name="Munk A.C."/>
            <person name="Brettin T."/>
            <person name="Detter J.C."/>
            <person name="Han C."/>
            <person name="Tapia R."/>
            <person name="Schmutz J."/>
            <person name="Larimer F."/>
            <person name="Land M."/>
            <person name="Hauser L."/>
            <person name="Challacombe J.F."/>
            <person name="Green L."/>
            <person name="Lindler L.E."/>
            <person name="Nikolich M.P."/>
            <person name="Richardson P."/>
        </authorList>
    </citation>
    <scope>NUCLEOTIDE SEQUENCE [LARGE SCALE GENOMIC DNA]</scope>
    <source>
        <strain>PB1/+</strain>
    </source>
</reference>